<protein>
    <recommendedName>
        <fullName>Putative protein-disulfide oxidoreductase DsbI</fullName>
    </recommendedName>
</protein>
<proteinExistence type="inferred from homology"/>
<reference key="1">
    <citation type="submission" date="2006-11" db="EMBL/GenBank/DDBJ databases">
        <title>Sequence of Campylobacter fetus subsp. fetus 82-40.</title>
        <authorList>
            <person name="Fouts D.E."/>
            <person name="Nelson K.E."/>
        </authorList>
    </citation>
    <scope>NUCLEOTIDE SEQUENCE [LARGE SCALE GENOMIC DNA]</scope>
    <source>
        <strain>82-40</strain>
    </source>
</reference>
<feature type="chain" id="PRO_0000295640" description="Putative protein-disulfide oxidoreductase DsbI">
    <location>
        <begin position="1"/>
        <end position="215"/>
    </location>
</feature>
<feature type="transmembrane region" description="Helical" evidence="2">
    <location>
        <begin position="23"/>
        <end position="43"/>
    </location>
</feature>
<feature type="transmembrane region" description="Helical" evidence="2">
    <location>
        <begin position="56"/>
        <end position="75"/>
    </location>
</feature>
<feature type="transmembrane region" description="Helical" evidence="2">
    <location>
        <begin position="79"/>
        <end position="99"/>
    </location>
</feature>
<feature type="transmembrane region" description="Helical" evidence="2">
    <location>
        <begin position="190"/>
        <end position="210"/>
    </location>
</feature>
<feature type="disulfide bond" description="Redox-active" evidence="1">
    <location>
        <begin position="52"/>
        <end position="55"/>
    </location>
</feature>
<feature type="disulfide bond" description="Redox-active" evidence="1">
    <location>
        <begin position="121"/>
        <end position="147"/>
    </location>
</feature>
<sequence>MEFFKDLKSDPIGKVASLQDERAIWIIMVVAMSGLVIVAHSLFQNYVYMAPCEQCVYIRFSMLVMALGGVIAAINPKNIILKIIGYVLGFYGAIIGMMYCIKLNSIHHAVHSEDPFGVQGCSAEPSFPFGLPLDMWAPDWFKPTGDCGYDNPIVPDDVSLSWLQQWFVDFYSEGWYLIPSLKFMNMAQACFIAYAVAFILLFAMFICWILKLKRA</sequence>
<comment type="function">
    <text evidence="1">Required for disulfide bond formation in some proteins. Part of a redox system composed of DsbI and DsbL that mediates formation of an essential disulfide bond in AssT (By similarity).</text>
</comment>
<comment type="subunit">
    <text evidence="1">Interacts with DsbL.</text>
</comment>
<comment type="subcellular location">
    <subcellularLocation>
        <location evidence="1">Cell inner membrane</location>
        <topology evidence="1">Multi-pass membrane protein</topology>
    </subcellularLocation>
</comment>
<comment type="similarity">
    <text evidence="3">Belongs to the DsbB family. DsbI subfamily.</text>
</comment>
<accession>A0RN51</accession>
<keyword id="KW-0997">Cell inner membrane</keyword>
<keyword id="KW-1003">Cell membrane</keyword>
<keyword id="KW-1015">Disulfide bond</keyword>
<keyword id="KW-0249">Electron transport</keyword>
<keyword id="KW-0472">Membrane</keyword>
<keyword id="KW-0560">Oxidoreductase</keyword>
<keyword id="KW-0676">Redox-active center</keyword>
<keyword id="KW-0812">Transmembrane</keyword>
<keyword id="KW-1133">Transmembrane helix</keyword>
<keyword id="KW-0813">Transport</keyword>
<gene>
    <name type="primary">dsbI</name>
    <name type="ordered locus">CFF8240_0434</name>
</gene>
<dbReference type="EMBL" id="CP000487">
    <property type="protein sequence ID" value="ABK82964.1"/>
    <property type="molecule type" value="Genomic_DNA"/>
</dbReference>
<dbReference type="RefSeq" id="WP_002848655.1">
    <property type="nucleotide sequence ID" value="NC_008599.1"/>
</dbReference>
<dbReference type="GeneID" id="61064278"/>
<dbReference type="KEGG" id="cff:CFF8240_0434"/>
<dbReference type="eggNOG" id="COG1495">
    <property type="taxonomic scope" value="Bacteria"/>
</dbReference>
<dbReference type="HOGENOM" id="CLU_090583_1_0_7"/>
<dbReference type="Proteomes" id="UP000000760">
    <property type="component" value="Chromosome"/>
</dbReference>
<dbReference type="GO" id="GO:0005886">
    <property type="term" value="C:plasma membrane"/>
    <property type="evidence" value="ECO:0007669"/>
    <property type="project" value="UniProtKB-SubCell"/>
</dbReference>
<dbReference type="GO" id="GO:0015035">
    <property type="term" value="F:protein-disulfide reductase activity"/>
    <property type="evidence" value="ECO:0007669"/>
    <property type="project" value="InterPro"/>
</dbReference>
<dbReference type="GO" id="GO:0006457">
    <property type="term" value="P:protein folding"/>
    <property type="evidence" value="ECO:0007669"/>
    <property type="project" value="InterPro"/>
</dbReference>
<dbReference type="Gene3D" id="1.20.1550.10">
    <property type="entry name" value="DsbB-like"/>
    <property type="match status" value="1"/>
</dbReference>
<dbReference type="InterPro" id="IPR003752">
    <property type="entry name" value="DiS_bond_form_DsbB/BdbC"/>
</dbReference>
<dbReference type="InterPro" id="IPR050183">
    <property type="entry name" value="DsbB"/>
</dbReference>
<dbReference type="InterPro" id="IPR023380">
    <property type="entry name" value="DsbB-like_sf"/>
</dbReference>
<dbReference type="NCBIfam" id="NF003304">
    <property type="entry name" value="PRK04307.1"/>
    <property type="match status" value="1"/>
</dbReference>
<dbReference type="PANTHER" id="PTHR36570">
    <property type="entry name" value="DISULFIDE BOND FORMATION PROTEIN B"/>
    <property type="match status" value="1"/>
</dbReference>
<dbReference type="PANTHER" id="PTHR36570:SF1">
    <property type="entry name" value="PROTEIN-DISULFIDE OXIDOREDUCTASE DSBI"/>
    <property type="match status" value="1"/>
</dbReference>
<dbReference type="Pfam" id="PF02600">
    <property type="entry name" value="DsbB"/>
    <property type="match status" value="1"/>
</dbReference>
<dbReference type="SUPFAM" id="SSF158442">
    <property type="entry name" value="DsbB-like"/>
    <property type="match status" value="1"/>
</dbReference>
<evidence type="ECO:0000250" key="1"/>
<evidence type="ECO:0000255" key="2"/>
<evidence type="ECO:0000305" key="3"/>
<organism>
    <name type="scientific">Campylobacter fetus subsp. fetus (strain 82-40)</name>
    <dbReference type="NCBI Taxonomy" id="360106"/>
    <lineage>
        <taxon>Bacteria</taxon>
        <taxon>Pseudomonadati</taxon>
        <taxon>Campylobacterota</taxon>
        <taxon>Epsilonproteobacteria</taxon>
        <taxon>Campylobacterales</taxon>
        <taxon>Campylobacteraceae</taxon>
        <taxon>Campylobacter</taxon>
    </lineage>
</organism>
<name>DSBI_CAMFF</name>